<reference key="1">
    <citation type="submission" date="2006-12" db="EMBL/GenBank/DDBJ databases">
        <title>Complete sequence of chromosome 1 of Verminephrobacter eiseniae EF01-2.</title>
        <authorList>
            <person name="Copeland A."/>
            <person name="Lucas S."/>
            <person name="Lapidus A."/>
            <person name="Barry K."/>
            <person name="Detter J.C."/>
            <person name="Glavina del Rio T."/>
            <person name="Dalin E."/>
            <person name="Tice H."/>
            <person name="Pitluck S."/>
            <person name="Chertkov O."/>
            <person name="Brettin T."/>
            <person name="Bruce D."/>
            <person name="Han C."/>
            <person name="Tapia R."/>
            <person name="Gilna P."/>
            <person name="Schmutz J."/>
            <person name="Larimer F."/>
            <person name="Land M."/>
            <person name="Hauser L."/>
            <person name="Kyrpides N."/>
            <person name="Kim E."/>
            <person name="Stahl D."/>
            <person name="Richardson P."/>
        </authorList>
    </citation>
    <scope>NUCLEOTIDE SEQUENCE [LARGE SCALE GENOMIC DNA]</scope>
    <source>
        <strain>EF01-2</strain>
    </source>
</reference>
<dbReference type="EMBL" id="CP000542">
    <property type="protein sequence ID" value="ABM56649.1"/>
    <property type="molecule type" value="Genomic_DNA"/>
</dbReference>
<dbReference type="STRING" id="391735.Veis_0870"/>
<dbReference type="KEGG" id="vei:Veis_0870"/>
<dbReference type="eggNOG" id="COG1495">
    <property type="taxonomic scope" value="Bacteria"/>
</dbReference>
<dbReference type="HOGENOM" id="CLU_098660_1_0_4"/>
<dbReference type="Proteomes" id="UP000000374">
    <property type="component" value="Chromosome"/>
</dbReference>
<dbReference type="GO" id="GO:0005886">
    <property type="term" value="C:plasma membrane"/>
    <property type="evidence" value="ECO:0007669"/>
    <property type="project" value="UniProtKB-SubCell"/>
</dbReference>
<dbReference type="GO" id="GO:0009055">
    <property type="term" value="F:electron transfer activity"/>
    <property type="evidence" value="ECO:0007669"/>
    <property type="project" value="UniProtKB-UniRule"/>
</dbReference>
<dbReference type="GO" id="GO:0015035">
    <property type="term" value="F:protein-disulfide reductase activity"/>
    <property type="evidence" value="ECO:0007669"/>
    <property type="project" value="UniProtKB-UniRule"/>
</dbReference>
<dbReference type="GO" id="GO:0006457">
    <property type="term" value="P:protein folding"/>
    <property type="evidence" value="ECO:0007669"/>
    <property type="project" value="InterPro"/>
</dbReference>
<dbReference type="Gene3D" id="1.20.1550.10">
    <property type="entry name" value="DsbB-like"/>
    <property type="match status" value="1"/>
</dbReference>
<dbReference type="HAMAP" id="MF_00286">
    <property type="entry name" value="DsbB"/>
    <property type="match status" value="1"/>
</dbReference>
<dbReference type="InterPro" id="IPR003752">
    <property type="entry name" value="DiS_bond_form_DsbB/BdbC"/>
</dbReference>
<dbReference type="InterPro" id="IPR022920">
    <property type="entry name" value="Disulphide_bond_form_DsbB"/>
</dbReference>
<dbReference type="InterPro" id="IPR050183">
    <property type="entry name" value="DsbB"/>
</dbReference>
<dbReference type="InterPro" id="IPR023380">
    <property type="entry name" value="DsbB-like_sf"/>
</dbReference>
<dbReference type="PANTHER" id="PTHR36570">
    <property type="entry name" value="DISULFIDE BOND FORMATION PROTEIN B"/>
    <property type="match status" value="1"/>
</dbReference>
<dbReference type="PANTHER" id="PTHR36570:SF3">
    <property type="entry name" value="DISULFIDE BOND FORMATION PROTEIN B"/>
    <property type="match status" value="1"/>
</dbReference>
<dbReference type="Pfam" id="PF02600">
    <property type="entry name" value="DsbB"/>
    <property type="match status" value="1"/>
</dbReference>
<dbReference type="SUPFAM" id="SSF158442">
    <property type="entry name" value="DsbB-like"/>
    <property type="match status" value="1"/>
</dbReference>
<comment type="function">
    <text evidence="1">Required for disulfide bond formation in some periplasmic proteins. Acts by oxidizing the DsbA protein.</text>
</comment>
<comment type="subcellular location">
    <subcellularLocation>
        <location evidence="1">Cell inner membrane</location>
        <topology evidence="1">Multi-pass membrane protein</topology>
    </subcellularLocation>
</comment>
<comment type="similarity">
    <text evidence="1">Belongs to the DsbB family.</text>
</comment>
<feature type="chain" id="PRO_0000298419" description="Disulfide bond formation protein B">
    <location>
        <begin position="1"/>
        <end position="177"/>
    </location>
</feature>
<feature type="topological domain" description="Cytoplasmic" evidence="1">
    <location>
        <begin position="1"/>
        <end position="14"/>
    </location>
</feature>
<feature type="transmembrane region" description="Helical" evidence="1">
    <location>
        <begin position="15"/>
        <end position="31"/>
    </location>
</feature>
<feature type="topological domain" description="Periplasmic" evidence="1">
    <location>
        <begin position="32"/>
        <end position="49"/>
    </location>
</feature>
<feature type="transmembrane region" description="Helical" evidence="1">
    <location>
        <begin position="50"/>
        <end position="64"/>
    </location>
</feature>
<feature type="topological domain" description="Cytoplasmic" evidence="1">
    <location>
        <begin position="65"/>
        <end position="70"/>
    </location>
</feature>
<feature type="transmembrane region" description="Helical" evidence="1">
    <location>
        <begin position="71"/>
        <end position="89"/>
    </location>
</feature>
<feature type="topological domain" description="Periplasmic" evidence="1">
    <location>
        <begin position="90"/>
        <end position="145"/>
    </location>
</feature>
<feature type="transmembrane region" description="Helical" evidence="1">
    <location>
        <begin position="146"/>
        <end position="164"/>
    </location>
</feature>
<feature type="topological domain" description="Cytoplasmic" evidence="1">
    <location>
        <begin position="165"/>
        <end position="177"/>
    </location>
</feature>
<feature type="disulfide bond" description="Redox-active" evidence="1">
    <location>
        <begin position="41"/>
        <end position="44"/>
    </location>
</feature>
<feature type="disulfide bond" description="Redox-active" evidence="1">
    <location>
        <begin position="104"/>
        <end position="131"/>
    </location>
</feature>
<keyword id="KW-0997">Cell inner membrane</keyword>
<keyword id="KW-1003">Cell membrane</keyword>
<keyword id="KW-0143">Chaperone</keyword>
<keyword id="KW-1015">Disulfide bond</keyword>
<keyword id="KW-0249">Electron transport</keyword>
<keyword id="KW-0472">Membrane</keyword>
<keyword id="KW-0560">Oxidoreductase</keyword>
<keyword id="KW-0676">Redox-active center</keyword>
<keyword id="KW-1185">Reference proteome</keyword>
<keyword id="KW-0812">Transmembrane</keyword>
<keyword id="KW-1133">Transmembrane helix</keyword>
<keyword id="KW-0813">Transport</keyword>
<sequence length="177" mass="19032">MMVWNWIDRTPRRVLALISLACVALLACGLYLQHVVGLVPCPMCIVQRYALIGLALLTGLASARSAKGWWLTLSALAALTAGFGATVAARQSWLQWYPPQSVSCGRDFYGMIESFPLSRAIPMILRGSGDCAAVDWSLLGGSIANWSFLCFALLGLLLLALLARGVRGARQRAPAPV</sequence>
<evidence type="ECO:0000255" key="1">
    <source>
        <dbReference type="HAMAP-Rule" id="MF_00286"/>
    </source>
</evidence>
<gene>
    <name evidence="1" type="primary">dsbB</name>
    <name type="ordered locus">Veis_0870</name>
</gene>
<protein>
    <recommendedName>
        <fullName evidence="1">Disulfide bond formation protein B</fullName>
    </recommendedName>
    <alternativeName>
        <fullName evidence="1">Disulfide oxidoreductase</fullName>
    </alternativeName>
</protein>
<name>DSBB_VEREI</name>
<organism>
    <name type="scientific">Verminephrobacter eiseniae (strain EF01-2)</name>
    <dbReference type="NCBI Taxonomy" id="391735"/>
    <lineage>
        <taxon>Bacteria</taxon>
        <taxon>Pseudomonadati</taxon>
        <taxon>Pseudomonadota</taxon>
        <taxon>Betaproteobacteria</taxon>
        <taxon>Burkholderiales</taxon>
        <taxon>Comamonadaceae</taxon>
        <taxon>Verminephrobacter</taxon>
    </lineage>
</organism>
<proteinExistence type="inferred from homology"/>
<accession>A1WG92</accession>